<reference key="1">
    <citation type="journal article" date="1986" name="J. Virol.">
        <title>Human parainfluenza type 3 virus hemagglutinin-neuraminidase glycoprotein: nucleotide sequence of mRNA and limited amino acid sequence of the purified protein.</title>
        <authorList>
            <person name="Elango N."/>
            <person name="Coligan J.E."/>
            <person name="Jambou R.C."/>
            <person name="Venkatesan S."/>
        </authorList>
    </citation>
    <scope>NUCLEOTIDE SEQUENCE [MRNA]</scope>
</reference>
<reference key="2">
    <citation type="journal article" date="1987" name="Virus Res.">
        <title>Molecular cloning and sequence analysis of the human parainfluenza 3 virus genes encoding the surface glycoproteins, F and HN.</title>
        <authorList>
            <person name="Galinski M.S."/>
            <person name="Mink M.A."/>
            <person name="Pons M.W."/>
        </authorList>
    </citation>
    <scope>NUCLEOTIDE SEQUENCE [GENOMIC RNA]</scope>
</reference>
<reference key="3">
    <citation type="journal article" date="1987" name="Intervirology">
        <title>Nucleotide sequence of the coding and flanking regions of the human parainfluenza virus 3 hemagglutinin-neuraminidase gene: comparison with other paramyxoviruses.</title>
        <authorList>
            <person name="Storey D.G."/>
            <person name="Cote M.-J."/>
            <person name="Dimock K."/>
            <person name="Kang C.Y."/>
        </authorList>
    </citation>
    <scope>NUCLEOTIDE SEQUENCE [MRNA]</scope>
</reference>
<reference key="4">
    <citation type="journal article" date="1995" name="Virology">
        <title>Hemagglutinin-neuraminidase of human parainfluenza 3: role of the neuraminidase in the viral life cycle.</title>
        <authorList>
            <person name="Huberman K."/>
            <person name="Peluso R.W."/>
            <person name="Moscona A."/>
        </authorList>
    </citation>
    <scope>VARIANT NEURAMINIDASE-DEFICIENT ASN-216</scope>
    <source>
        <strain>Isolate C28</strain>
    </source>
</reference>
<reference key="5">
    <citation type="journal article" date="2003" name="J. Virol.">
        <title>Mutations in human parainfluenza virus type 3 hemagglutinin-neuraminidase causing increased receptor binding activity and resistance to the transition state sialic acid analog 4-GU-DANA (Zanamivir).</title>
        <authorList>
            <person name="Murrell M."/>
            <person name="Porotto M."/>
            <person name="Weber T."/>
            <person name="Greengard O."/>
            <person name="Moscona A."/>
        </authorList>
    </citation>
    <scope>VARIANT 4-GU-DANA-RESISTANT ILE-193</scope>
    <source>
        <strain>Isolate ZM1</strain>
    </source>
</reference>
<gene>
    <name type="primary">HN</name>
</gene>
<feature type="chain" id="PRO_0000142625" description="Hemagglutinin-neuraminidase">
    <location>
        <begin position="1"/>
        <end position="572"/>
    </location>
</feature>
<feature type="topological domain" description="Intravirion" evidence="5">
    <location>
        <begin position="1"/>
        <end position="31"/>
    </location>
</feature>
<feature type="transmembrane region" description="Helical" evidence="5">
    <location>
        <begin position="32"/>
        <end position="52"/>
    </location>
</feature>
<feature type="topological domain" description="Virion surface" evidence="5">
    <location>
        <begin position="53"/>
        <end position="572"/>
    </location>
</feature>
<feature type="region of interest" description="Involved in neuraminidase activity" evidence="3">
    <location>
        <begin position="252"/>
        <end position="257"/>
    </location>
</feature>
<feature type="glycosylation site" description="N-linked (GlcNAc...) asparagine; by host" evidence="5">
    <location>
        <position position="308"/>
    </location>
</feature>
<feature type="glycosylation site" description="N-linked (GlcNAc...) asparagine; by host" evidence="5">
    <location>
        <position position="351"/>
    </location>
</feature>
<feature type="glycosylation site" description="N-linked (GlcNAc...) asparagine; by host" evidence="5">
    <location>
        <position position="523"/>
    </location>
</feature>
<feature type="disulfide bond" evidence="4">
    <location>
        <begin position="190"/>
        <end position="214"/>
    </location>
</feature>
<feature type="disulfide bond" evidence="4">
    <location>
        <begin position="256"/>
        <end position="269"/>
    </location>
</feature>
<feature type="disulfide bond" evidence="4">
    <location>
        <begin position="355"/>
        <end position="469"/>
    </location>
</feature>
<feature type="disulfide bond" evidence="4">
    <location>
        <begin position="463"/>
        <end position="473"/>
    </location>
</feature>
<feature type="disulfide bond" evidence="4">
    <location>
        <begin position="535"/>
        <end position="544"/>
    </location>
</feature>
<feature type="sequence variant" description="In strain: Isolate ZM1; 4-GU-DANA antiviral drug resistant and increased receptor binding avidity." evidence="6">
    <original>T</original>
    <variation>I</variation>
    <location>
        <position position="193"/>
    </location>
</feature>
<feature type="sequence variant" description="In strain: Isolate C28; 50% loss of neuraminidase activity." evidence="7">
    <original>D</original>
    <variation>N</variation>
    <location>
        <position position="216"/>
    </location>
</feature>
<feature type="sequence variant" description="In strain: Isolate ZM1.">
    <original>I</original>
    <variation>V</variation>
    <location>
        <position position="567"/>
    </location>
</feature>
<feature type="sequence conflict" description="In Ref. 2; AAA46853." evidence="8" ref="2">
    <original>Q</original>
    <variation>R</variation>
    <location>
        <position position="135"/>
    </location>
</feature>
<feature type="sequence conflict" description="In Ref. 2; AAA46853." evidence="8" ref="2">
    <original>V</original>
    <variation>A</variation>
    <location>
        <position position="146"/>
    </location>
</feature>
<feature type="sequence conflict" description="In Ref. 3; AAA46856." evidence="8" ref="3">
    <original>S</original>
    <variation>G</variation>
    <location>
        <position position="489"/>
    </location>
</feature>
<feature type="sequence conflict" description="In Ref. 2 and 3." evidence="8" ref="2 3">
    <original>S</original>
    <variation>A</variation>
    <location>
        <position position="512"/>
    </location>
</feature>
<feature type="strand" evidence="9">
    <location>
        <begin position="148"/>
        <end position="150"/>
    </location>
</feature>
<feature type="helix" evidence="9">
    <location>
        <begin position="153"/>
        <end position="156"/>
    </location>
</feature>
<feature type="strand" evidence="9">
    <location>
        <begin position="160"/>
        <end position="162"/>
    </location>
</feature>
<feature type="strand" evidence="9">
    <location>
        <begin position="164"/>
        <end position="166"/>
    </location>
</feature>
<feature type="strand" evidence="10">
    <location>
        <begin position="168"/>
        <end position="170"/>
    </location>
</feature>
<feature type="strand" evidence="9">
    <location>
        <begin position="177"/>
        <end position="179"/>
    </location>
</feature>
<feature type="strand" evidence="12">
    <location>
        <begin position="183"/>
        <end position="188"/>
    </location>
</feature>
<feature type="strand" evidence="9">
    <location>
        <begin position="190"/>
        <end position="198"/>
    </location>
</feature>
<feature type="strand" evidence="9">
    <location>
        <begin position="203"/>
        <end position="215"/>
    </location>
</feature>
<feature type="strand" evidence="9">
    <location>
        <begin position="221"/>
        <end position="231"/>
    </location>
</feature>
<feature type="strand" evidence="9">
    <location>
        <begin position="235"/>
        <end position="247"/>
    </location>
</feature>
<feature type="turn" evidence="9">
    <location>
        <begin position="249"/>
        <end position="251"/>
    </location>
</feature>
<feature type="strand" evidence="9">
    <location>
        <begin position="254"/>
        <end position="261"/>
    </location>
</feature>
<feature type="strand" evidence="9">
    <location>
        <begin position="264"/>
        <end position="270"/>
    </location>
</feature>
<feature type="helix" evidence="9">
    <location>
        <begin position="276"/>
        <end position="281"/>
    </location>
</feature>
<feature type="strand" evidence="9">
    <location>
        <begin position="282"/>
        <end position="284"/>
    </location>
</feature>
<feature type="strand" evidence="9">
    <location>
        <begin position="288"/>
        <end position="293"/>
    </location>
</feature>
<feature type="strand" evidence="12">
    <location>
        <begin position="295"/>
        <end position="297"/>
    </location>
</feature>
<feature type="strand" evidence="9">
    <location>
        <begin position="299"/>
        <end position="304"/>
    </location>
</feature>
<feature type="helix" evidence="9">
    <location>
        <begin position="306"/>
        <end position="308"/>
    </location>
</feature>
<feature type="strand" evidence="9">
    <location>
        <begin position="309"/>
        <end position="313"/>
    </location>
</feature>
<feature type="strand" evidence="9">
    <location>
        <begin position="315"/>
        <end position="320"/>
    </location>
</feature>
<feature type="strand" evidence="9">
    <location>
        <begin position="326"/>
        <end position="328"/>
    </location>
</feature>
<feature type="strand" evidence="9">
    <location>
        <begin position="331"/>
        <end position="342"/>
    </location>
</feature>
<feature type="helix" evidence="9">
    <location>
        <begin position="360"/>
        <end position="366"/>
    </location>
</feature>
<feature type="helix" evidence="9">
    <location>
        <begin position="370"/>
        <end position="372"/>
    </location>
</feature>
<feature type="strand" evidence="9">
    <location>
        <begin position="377"/>
        <end position="386"/>
    </location>
</feature>
<feature type="helix" evidence="9">
    <location>
        <begin position="388"/>
        <end position="390"/>
    </location>
</feature>
<feature type="strand" evidence="9">
    <location>
        <begin position="392"/>
        <end position="398"/>
    </location>
</feature>
<feature type="turn" evidence="9">
    <location>
        <begin position="401"/>
        <end position="403"/>
    </location>
</feature>
<feature type="strand" evidence="9">
    <location>
        <begin position="410"/>
        <end position="415"/>
    </location>
</feature>
<feature type="strand" evidence="9">
    <location>
        <begin position="418"/>
        <end position="423"/>
    </location>
</feature>
<feature type="strand" evidence="11">
    <location>
        <begin position="427"/>
        <end position="429"/>
    </location>
</feature>
<feature type="strand" evidence="9">
    <location>
        <begin position="433"/>
        <end position="438"/>
    </location>
</feature>
<feature type="strand" evidence="9">
    <location>
        <begin position="446"/>
        <end position="449"/>
    </location>
</feature>
<feature type="strand" evidence="9">
    <location>
        <begin position="461"/>
        <end position="463"/>
    </location>
</feature>
<feature type="strand" evidence="9">
    <location>
        <begin position="481"/>
        <end position="485"/>
    </location>
</feature>
<feature type="strand" evidence="9">
    <location>
        <begin position="488"/>
        <end position="496"/>
    </location>
</feature>
<feature type="strand" evidence="9">
    <location>
        <begin position="498"/>
        <end position="503"/>
    </location>
</feature>
<feature type="strand" evidence="9">
    <location>
        <begin position="505"/>
        <end position="513"/>
    </location>
</feature>
<feature type="strand" evidence="9">
    <location>
        <begin position="515"/>
        <end position="522"/>
    </location>
</feature>
<feature type="strand" evidence="9">
    <location>
        <begin position="526"/>
        <end position="538"/>
    </location>
</feature>
<feature type="strand" evidence="9">
    <location>
        <begin position="541"/>
        <end position="552"/>
    </location>
</feature>
<feature type="turn" evidence="9">
    <location>
        <begin position="553"/>
        <end position="556"/>
    </location>
</feature>
<feature type="strand" evidence="9">
    <location>
        <begin position="557"/>
        <end position="566"/>
    </location>
</feature>
<feature type="strand" evidence="9">
    <location>
        <begin position="569"/>
        <end position="571"/>
    </location>
</feature>
<proteinExistence type="evidence at protein level"/>
<keyword id="KW-0002">3D-structure</keyword>
<keyword id="KW-1015">Disulfide bond</keyword>
<keyword id="KW-0325">Glycoprotein</keyword>
<keyword id="KW-0348">Hemagglutinin</keyword>
<keyword id="KW-1032">Host cell membrane</keyword>
<keyword id="KW-1043">Host membrane</keyword>
<keyword id="KW-0945">Host-virus interaction</keyword>
<keyword id="KW-0378">Hydrolase</keyword>
<keyword id="KW-0472">Membrane</keyword>
<keyword id="KW-0735">Signal-anchor</keyword>
<keyword id="KW-0812">Transmembrane</keyword>
<keyword id="KW-1133">Transmembrane helix</keyword>
<keyword id="KW-1161">Viral attachment to host cell</keyword>
<keyword id="KW-0261">Viral envelope protein</keyword>
<keyword id="KW-0946">Virion</keyword>
<keyword id="KW-1160">Virus entry into host cell</keyword>
<dbReference type="EC" id="3.2.1.18" evidence="4"/>
<dbReference type="EMBL" id="M17641">
    <property type="protein sequence ID" value="AAA46846.1"/>
    <property type="molecule type" value="mRNA"/>
</dbReference>
<dbReference type="EMBL" id="M21649">
    <property type="protein sequence ID" value="AAA46853.1"/>
    <property type="molecule type" value="Genomic_RNA"/>
</dbReference>
<dbReference type="EMBL" id="M20402">
    <property type="protein sequence ID" value="AAA46856.1"/>
    <property type="molecule type" value="mRNA"/>
</dbReference>
<dbReference type="PIR" id="A27765">
    <property type="entry name" value="HNNZP3"/>
</dbReference>
<dbReference type="PDB" id="4MZA">
    <property type="method" value="X-ray"/>
    <property type="resolution" value="1.65 A"/>
    <property type="chains" value="A/B=136-572"/>
</dbReference>
<dbReference type="PDB" id="4MZE">
    <property type="method" value="X-ray"/>
    <property type="resolution" value="1.80 A"/>
    <property type="chains" value="A/B=136-572"/>
</dbReference>
<dbReference type="PDB" id="4XJR">
    <property type="method" value="X-ray"/>
    <property type="resolution" value="3.00 A"/>
    <property type="chains" value="A/B=125-572"/>
</dbReference>
<dbReference type="PDB" id="8TQI">
    <property type="method" value="EM"/>
    <property type="resolution" value="3.24 A"/>
    <property type="chains" value="A/B=136-572"/>
</dbReference>
<dbReference type="PDBsum" id="4MZA"/>
<dbReference type="PDBsum" id="4MZE"/>
<dbReference type="PDBsum" id="4XJR"/>
<dbReference type="PDBsum" id="8TQI"/>
<dbReference type="EMDB" id="EMD-41505"/>
<dbReference type="SMR" id="P08492"/>
<dbReference type="CAZy" id="GH83">
    <property type="family name" value="Glycoside Hydrolase Family 83"/>
</dbReference>
<dbReference type="GlyCosmos" id="P08492">
    <property type="glycosylation" value="3 sites, No reported glycans"/>
</dbReference>
<dbReference type="EvolutionaryTrace" id="P08492"/>
<dbReference type="GO" id="GO:0020002">
    <property type="term" value="C:host cell plasma membrane"/>
    <property type="evidence" value="ECO:0007669"/>
    <property type="project" value="UniProtKB-SubCell"/>
</dbReference>
<dbReference type="GO" id="GO:0016020">
    <property type="term" value="C:membrane"/>
    <property type="evidence" value="ECO:0007669"/>
    <property type="project" value="UniProtKB-KW"/>
</dbReference>
<dbReference type="GO" id="GO:0019031">
    <property type="term" value="C:viral envelope"/>
    <property type="evidence" value="ECO:0007669"/>
    <property type="project" value="UniProtKB-KW"/>
</dbReference>
<dbReference type="GO" id="GO:0055036">
    <property type="term" value="C:virion membrane"/>
    <property type="evidence" value="ECO:0007669"/>
    <property type="project" value="UniProtKB-SubCell"/>
</dbReference>
<dbReference type="GO" id="GO:0004308">
    <property type="term" value="F:exo-alpha-sialidase activity"/>
    <property type="evidence" value="ECO:0007669"/>
    <property type="project" value="UniProtKB-EC"/>
</dbReference>
<dbReference type="GO" id="GO:0046789">
    <property type="term" value="F:host cell surface receptor binding"/>
    <property type="evidence" value="ECO:0007669"/>
    <property type="project" value="InterPro"/>
</dbReference>
<dbReference type="GO" id="GO:0046718">
    <property type="term" value="P:symbiont entry into host cell"/>
    <property type="evidence" value="ECO:0007669"/>
    <property type="project" value="UniProtKB-KW"/>
</dbReference>
<dbReference type="GO" id="GO:0019062">
    <property type="term" value="P:virion attachment to host cell"/>
    <property type="evidence" value="ECO:0007669"/>
    <property type="project" value="UniProtKB-KW"/>
</dbReference>
<dbReference type="CDD" id="cd15469">
    <property type="entry name" value="HN"/>
    <property type="match status" value="1"/>
</dbReference>
<dbReference type="Gene3D" id="2.120.10.10">
    <property type="match status" value="1"/>
</dbReference>
<dbReference type="InterPro" id="IPR016285">
    <property type="entry name" value="Hemagglutn-neuramid"/>
</dbReference>
<dbReference type="InterPro" id="IPR000665">
    <property type="entry name" value="Hemagglutn/HN"/>
</dbReference>
<dbReference type="InterPro" id="IPR036278">
    <property type="entry name" value="Sialidase_sf"/>
</dbReference>
<dbReference type="Pfam" id="PF00423">
    <property type="entry name" value="HN"/>
    <property type="match status" value="1"/>
</dbReference>
<dbReference type="PIRSF" id="PIRSF001072">
    <property type="entry name" value="Hemagglut-neuramid_paramyxoV"/>
    <property type="match status" value="1"/>
</dbReference>
<dbReference type="SUPFAM" id="SSF50939">
    <property type="entry name" value="Sialidases"/>
    <property type="match status" value="1"/>
</dbReference>
<organism>
    <name type="scientific">Human parainfluenza 3 virus (strain Wash/47885/57)</name>
    <name type="common">HPIV-3</name>
    <name type="synonym">Human parainfluenza 3 virus (strain NIH 47885)</name>
    <dbReference type="NCBI Taxonomy" id="11217"/>
    <lineage>
        <taxon>Viruses</taxon>
        <taxon>Riboviria</taxon>
        <taxon>Orthornavirae</taxon>
        <taxon>Negarnaviricota</taxon>
        <taxon>Haploviricotina</taxon>
        <taxon>Monjiviricetes</taxon>
        <taxon>Mononegavirales</taxon>
        <taxon>Paramyxoviridae</taxon>
        <taxon>Feraresvirinae</taxon>
        <taxon>Respirovirus</taxon>
        <taxon>Respirovirus pneumoniae</taxon>
    </lineage>
</organism>
<evidence type="ECO:0000250" key="1"/>
<evidence type="ECO:0000250" key="2">
    <source>
        <dbReference type="UniProtKB" id="P04853"/>
    </source>
</evidence>
<evidence type="ECO:0000250" key="3">
    <source>
        <dbReference type="UniProtKB" id="Q91UL0"/>
    </source>
</evidence>
<evidence type="ECO:0000250" key="4">
    <source>
        <dbReference type="UniProtKB" id="Q9WAF5"/>
    </source>
</evidence>
<evidence type="ECO:0000255" key="5"/>
<evidence type="ECO:0000269" key="6">
    <source>
    </source>
</evidence>
<evidence type="ECO:0000269" key="7">
    <source>
    </source>
</evidence>
<evidence type="ECO:0000305" key="8"/>
<evidence type="ECO:0007829" key="9">
    <source>
        <dbReference type="PDB" id="4MZA"/>
    </source>
</evidence>
<evidence type="ECO:0007829" key="10">
    <source>
        <dbReference type="PDB" id="4MZE"/>
    </source>
</evidence>
<evidence type="ECO:0007829" key="11">
    <source>
        <dbReference type="PDB" id="4XJR"/>
    </source>
</evidence>
<evidence type="ECO:0007829" key="12">
    <source>
        <dbReference type="PDB" id="8TQI"/>
    </source>
</evidence>
<organismHost>
    <name type="scientific">Homo sapiens</name>
    <name type="common">Human</name>
    <dbReference type="NCBI Taxonomy" id="9606"/>
</organismHost>
<comment type="function">
    <text evidence="1">Attaches the virus to sialic acid-containing cell receptors and thereby initiating infection. Binding of HN protein to the receptor induces a conformational change that allows the F protein to trigger virion/cell membranes fusion (By similarity).</text>
</comment>
<comment type="function">
    <text evidence="1">Neuraminidase activity ensures the efficient spread of the virus by dissociating the mature virions from the neuraminic acid containing glycoproteins.</text>
</comment>
<comment type="catalytic activity">
    <reaction evidence="4">
        <text>Hydrolysis of alpha-(2-&gt;3)-, alpha-(2-&gt;6)-, alpha-(2-&gt;8)- glycosidic linkages of terminal sialic acid residues in oligosaccharides, glycoproteins, glycolipids, colominic acid and synthetic substrates.</text>
        <dbReference type="EC" id="3.2.1.18"/>
    </reaction>
</comment>
<comment type="biophysicochemical properties">
    <phDependence>
        <text>Optimum pH is 4.7.</text>
    </phDependence>
</comment>
<comment type="subunit">
    <text evidence="2 4">Homotetramer; composed of disulfide-linked homodimers (By similarity). Interacts with F protein trimer (By similarity).</text>
</comment>
<comment type="subcellular location">
    <subcellularLocation>
        <location evidence="8">Virion membrane</location>
        <topology evidence="8">Single-pass type II membrane protein</topology>
    </subcellularLocation>
    <subcellularLocation>
        <location evidence="8">Host cell membrane</location>
        <topology evidence="8">Single-pass type II membrane protein</topology>
    </subcellularLocation>
</comment>
<comment type="domain">
    <text evidence="4">The C-terminus (head domain) is involved in binding the cellular receptor.</text>
</comment>
<comment type="similarity">
    <text evidence="8">Belongs to the paramyxoviruses hemagglutinin-neuraminidase family.</text>
</comment>
<name>HN_PI3H4</name>
<accession>P08492</accession>
<protein>
    <recommendedName>
        <fullName>Hemagglutinin-neuraminidase</fullName>
        <ecNumber evidence="4">3.2.1.18</ecNumber>
    </recommendedName>
</protein>
<sequence length="572" mass="64247">MEYWKHTNHGKDAGNELETSMATHGNKITNKITYILWTIILVLLSIVFIIVLINSIKSEKAHESLLQDVNNEFMEVTEKIQMASDNINDLIQSGVNTRLLTIQSHVQNYIPISLTQQMSDLRKFISEITIRNDNQEVPPQRITHDVGIKPLNPDDFWRCTSGLPSLMKTPKIRLMPGPGLLAMPTTVDGCVRTPSLVINDLIYAYTSNLITRGCQDIGKSYQVLQIGIITVNSDLVPDLNPRISHTFNINDNRKSCSLALLNTDVYQLCSTPKVDERSDYASSGIEDIVLDIVNHDGSISTTRFKNNNISFDQPYAALYPSVGPGIYYKGKIIFLGYGGLEHPINENAICNTTGCPGKTQRDCNQASHSPWFSDRRMVNSIIVVDKGLNSIPKLKVWTISMRQNYWGSEGRLLLLGNKIYIYTRSTSWHSKLQLGIIDITDYSDIRIKWTWHNVLSRPGNNECPWGHSCPDGCITGVYTDAYPLNPTGSIVSSVILDSQKSRVNPVITYSTSTERVNELAIRNKTLSAGYTTTSCITHYNKGYCFHIVEINHKSLDTFQPMLFKTEIPKSCS</sequence>